<sequence length="545" mass="60122">MTTNYIFVTGGVVSSLGKGIAAASLAAILEARGLNVTIMKLDPYINVDPGTMSPIQHGEVFVTEDGAETDLDLGHYERFIRTKMSRRNNFTTGRIYSDVLRKERRGDYLGATVQVIPHITNAIKERVLEGGEGHDVVLVEIGGTVGDIESLPFLEAIRQLAVDIGREHALFMHLTLVPYLAAAGEVKTKPTQHSVKELLSIGIQPDILICRSDRAVPANERAKIALFCNVPEKAVISMKDVDSIYKIPGLLKSQGLDDYICKRFSLNCPEANLSEWEQVIYEEANPAGEVTIGMVGKYIELPDAYKSVIEALKHGGLKNRVTVNIKLIDSQDVETRGVEILKDLDAILIPGGFGYRGVEGKIATARYARENNIPYLGICLGMQVALIEFARNVAGMDNANSTEFVPDCKYPVVALITEWRDEDGNVEVRSEKSDLGGTMRLGAQQCQLSDDSLVRQLYGASTIVERHRHRYEVNNMLLKQIEAAGLRVAGRSGDDQLVEIIEVPNHPWFVACQFHPEFTSTPRDGHPLFAGFVKAANEHQKRQAK</sequence>
<proteinExistence type="inferred from homology"/>
<feature type="chain" id="PRO_1000139561" description="CTP synthase">
    <location>
        <begin position="1"/>
        <end position="545"/>
    </location>
</feature>
<feature type="domain" description="Glutamine amidotransferase type-1" evidence="1">
    <location>
        <begin position="291"/>
        <end position="542"/>
    </location>
</feature>
<feature type="region of interest" description="Amidoligase domain" evidence="1">
    <location>
        <begin position="1"/>
        <end position="266"/>
    </location>
</feature>
<feature type="active site" description="Nucleophile; for glutamine hydrolysis" evidence="1">
    <location>
        <position position="379"/>
    </location>
</feature>
<feature type="active site" evidence="1">
    <location>
        <position position="515"/>
    </location>
</feature>
<feature type="active site" evidence="1">
    <location>
        <position position="517"/>
    </location>
</feature>
<feature type="binding site" evidence="1">
    <location>
        <position position="14"/>
    </location>
    <ligand>
        <name>CTP</name>
        <dbReference type="ChEBI" id="CHEBI:37563"/>
        <note>allosteric inhibitor</note>
    </ligand>
</feature>
<feature type="binding site" evidence="1">
    <location>
        <position position="14"/>
    </location>
    <ligand>
        <name>UTP</name>
        <dbReference type="ChEBI" id="CHEBI:46398"/>
    </ligand>
</feature>
<feature type="binding site" evidence="1">
    <location>
        <begin position="15"/>
        <end position="20"/>
    </location>
    <ligand>
        <name>ATP</name>
        <dbReference type="ChEBI" id="CHEBI:30616"/>
    </ligand>
</feature>
<feature type="binding site" evidence="1">
    <location>
        <position position="72"/>
    </location>
    <ligand>
        <name>ATP</name>
        <dbReference type="ChEBI" id="CHEBI:30616"/>
    </ligand>
</feature>
<feature type="binding site" evidence="1">
    <location>
        <position position="72"/>
    </location>
    <ligand>
        <name>Mg(2+)</name>
        <dbReference type="ChEBI" id="CHEBI:18420"/>
    </ligand>
</feature>
<feature type="binding site" evidence="1">
    <location>
        <position position="140"/>
    </location>
    <ligand>
        <name>Mg(2+)</name>
        <dbReference type="ChEBI" id="CHEBI:18420"/>
    </ligand>
</feature>
<feature type="binding site" evidence="1">
    <location>
        <begin position="147"/>
        <end position="149"/>
    </location>
    <ligand>
        <name>CTP</name>
        <dbReference type="ChEBI" id="CHEBI:37563"/>
        <note>allosteric inhibitor</note>
    </ligand>
</feature>
<feature type="binding site" evidence="1">
    <location>
        <begin position="187"/>
        <end position="192"/>
    </location>
    <ligand>
        <name>CTP</name>
        <dbReference type="ChEBI" id="CHEBI:37563"/>
        <note>allosteric inhibitor</note>
    </ligand>
</feature>
<feature type="binding site" evidence="1">
    <location>
        <begin position="187"/>
        <end position="192"/>
    </location>
    <ligand>
        <name>UTP</name>
        <dbReference type="ChEBI" id="CHEBI:46398"/>
    </ligand>
</feature>
<feature type="binding site" evidence="1">
    <location>
        <position position="223"/>
    </location>
    <ligand>
        <name>CTP</name>
        <dbReference type="ChEBI" id="CHEBI:37563"/>
        <note>allosteric inhibitor</note>
    </ligand>
</feature>
<feature type="binding site" evidence="1">
    <location>
        <position position="223"/>
    </location>
    <ligand>
        <name>UTP</name>
        <dbReference type="ChEBI" id="CHEBI:46398"/>
    </ligand>
</feature>
<feature type="binding site" evidence="1">
    <location>
        <begin position="239"/>
        <end position="241"/>
    </location>
    <ligand>
        <name>ATP</name>
        <dbReference type="ChEBI" id="CHEBI:30616"/>
    </ligand>
</feature>
<feature type="binding site" evidence="1">
    <location>
        <position position="352"/>
    </location>
    <ligand>
        <name>L-glutamine</name>
        <dbReference type="ChEBI" id="CHEBI:58359"/>
    </ligand>
</feature>
<feature type="binding site" evidence="1">
    <location>
        <begin position="380"/>
        <end position="383"/>
    </location>
    <ligand>
        <name>L-glutamine</name>
        <dbReference type="ChEBI" id="CHEBI:58359"/>
    </ligand>
</feature>
<feature type="binding site" evidence="1">
    <location>
        <position position="403"/>
    </location>
    <ligand>
        <name>L-glutamine</name>
        <dbReference type="ChEBI" id="CHEBI:58359"/>
    </ligand>
</feature>
<feature type="binding site" evidence="1">
    <location>
        <position position="470"/>
    </location>
    <ligand>
        <name>L-glutamine</name>
        <dbReference type="ChEBI" id="CHEBI:58359"/>
    </ligand>
</feature>
<organism>
    <name type="scientific">Salmonella heidelberg (strain SL476)</name>
    <dbReference type="NCBI Taxonomy" id="454169"/>
    <lineage>
        <taxon>Bacteria</taxon>
        <taxon>Pseudomonadati</taxon>
        <taxon>Pseudomonadota</taxon>
        <taxon>Gammaproteobacteria</taxon>
        <taxon>Enterobacterales</taxon>
        <taxon>Enterobacteriaceae</taxon>
        <taxon>Salmonella</taxon>
    </lineage>
</organism>
<gene>
    <name evidence="1" type="primary">pyrG</name>
    <name type="ordered locus">SeHA_C3150</name>
</gene>
<evidence type="ECO:0000255" key="1">
    <source>
        <dbReference type="HAMAP-Rule" id="MF_01227"/>
    </source>
</evidence>
<keyword id="KW-0067">ATP-binding</keyword>
<keyword id="KW-0315">Glutamine amidotransferase</keyword>
<keyword id="KW-0436">Ligase</keyword>
<keyword id="KW-0460">Magnesium</keyword>
<keyword id="KW-0479">Metal-binding</keyword>
<keyword id="KW-0547">Nucleotide-binding</keyword>
<keyword id="KW-0665">Pyrimidine biosynthesis</keyword>
<protein>
    <recommendedName>
        <fullName evidence="1">CTP synthase</fullName>
        <ecNumber evidence="1">6.3.4.2</ecNumber>
    </recommendedName>
    <alternativeName>
        <fullName evidence="1">Cytidine 5'-triphosphate synthase</fullName>
    </alternativeName>
    <alternativeName>
        <fullName evidence="1">Cytidine triphosphate synthetase</fullName>
        <shortName evidence="1">CTP synthetase</shortName>
        <shortName evidence="1">CTPS</shortName>
    </alternativeName>
    <alternativeName>
        <fullName evidence="1">UTP--ammonia ligase</fullName>
    </alternativeName>
</protein>
<accession>B4TFZ2</accession>
<comment type="function">
    <text evidence="1">Catalyzes the ATP-dependent amination of UTP to CTP with either L-glutamine or ammonia as the source of nitrogen. Regulates intracellular CTP levels through interactions with the four ribonucleotide triphosphates.</text>
</comment>
<comment type="catalytic activity">
    <reaction evidence="1">
        <text>UTP + L-glutamine + ATP + H2O = CTP + L-glutamate + ADP + phosphate + 2 H(+)</text>
        <dbReference type="Rhea" id="RHEA:26426"/>
        <dbReference type="ChEBI" id="CHEBI:15377"/>
        <dbReference type="ChEBI" id="CHEBI:15378"/>
        <dbReference type="ChEBI" id="CHEBI:29985"/>
        <dbReference type="ChEBI" id="CHEBI:30616"/>
        <dbReference type="ChEBI" id="CHEBI:37563"/>
        <dbReference type="ChEBI" id="CHEBI:43474"/>
        <dbReference type="ChEBI" id="CHEBI:46398"/>
        <dbReference type="ChEBI" id="CHEBI:58359"/>
        <dbReference type="ChEBI" id="CHEBI:456216"/>
        <dbReference type="EC" id="6.3.4.2"/>
    </reaction>
</comment>
<comment type="catalytic activity">
    <reaction evidence="1">
        <text>L-glutamine + H2O = L-glutamate + NH4(+)</text>
        <dbReference type="Rhea" id="RHEA:15889"/>
        <dbReference type="ChEBI" id="CHEBI:15377"/>
        <dbReference type="ChEBI" id="CHEBI:28938"/>
        <dbReference type="ChEBI" id="CHEBI:29985"/>
        <dbReference type="ChEBI" id="CHEBI:58359"/>
    </reaction>
</comment>
<comment type="catalytic activity">
    <reaction evidence="1">
        <text>UTP + NH4(+) + ATP = CTP + ADP + phosphate + 2 H(+)</text>
        <dbReference type="Rhea" id="RHEA:16597"/>
        <dbReference type="ChEBI" id="CHEBI:15378"/>
        <dbReference type="ChEBI" id="CHEBI:28938"/>
        <dbReference type="ChEBI" id="CHEBI:30616"/>
        <dbReference type="ChEBI" id="CHEBI:37563"/>
        <dbReference type="ChEBI" id="CHEBI:43474"/>
        <dbReference type="ChEBI" id="CHEBI:46398"/>
        <dbReference type="ChEBI" id="CHEBI:456216"/>
    </reaction>
</comment>
<comment type="activity regulation">
    <text evidence="1">Allosterically activated by GTP, when glutamine is the substrate; GTP has no effect on the reaction when ammonia is the substrate. The allosteric effector GTP functions by stabilizing the protein conformation that binds the tetrahedral intermediate(s) formed during glutamine hydrolysis. Inhibited by the product CTP, via allosteric rather than competitive inhibition.</text>
</comment>
<comment type="pathway">
    <text evidence="1">Pyrimidine metabolism; CTP biosynthesis via de novo pathway; CTP from UDP: step 2/2.</text>
</comment>
<comment type="subunit">
    <text evidence="1">Homotetramer.</text>
</comment>
<comment type="miscellaneous">
    <text evidence="1">CTPSs have evolved a hybrid strategy for distinguishing between UTP and CTP. The overlapping regions of the product feedback inhibitory and substrate sites recognize a common feature in both compounds, the triphosphate moiety. To differentiate isosteric substrate and product pyrimidine rings, an additional pocket far from the expected kinase/ligase catalytic site, specifically recognizes the cytosine and ribose portions of the product inhibitor.</text>
</comment>
<comment type="similarity">
    <text evidence="1">Belongs to the CTP synthase family.</text>
</comment>
<name>PYRG_SALHS</name>
<reference key="1">
    <citation type="journal article" date="2011" name="J. Bacteriol.">
        <title>Comparative genomics of 28 Salmonella enterica isolates: evidence for CRISPR-mediated adaptive sublineage evolution.</title>
        <authorList>
            <person name="Fricke W.F."/>
            <person name="Mammel M.K."/>
            <person name="McDermott P.F."/>
            <person name="Tartera C."/>
            <person name="White D.G."/>
            <person name="Leclerc J.E."/>
            <person name="Ravel J."/>
            <person name="Cebula T.A."/>
        </authorList>
    </citation>
    <scope>NUCLEOTIDE SEQUENCE [LARGE SCALE GENOMIC DNA]</scope>
    <source>
        <strain>SL476</strain>
    </source>
</reference>
<dbReference type="EC" id="6.3.4.2" evidence="1"/>
<dbReference type="EMBL" id="CP001120">
    <property type="protein sequence ID" value="ACF67653.1"/>
    <property type="molecule type" value="Genomic_DNA"/>
</dbReference>
<dbReference type="RefSeq" id="WP_000210863.1">
    <property type="nucleotide sequence ID" value="NC_011083.1"/>
</dbReference>
<dbReference type="SMR" id="B4TFZ2"/>
<dbReference type="MEROPS" id="C26.964"/>
<dbReference type="KEGG" id="seh:SeHA_C3150"/>
<dbReference type="HOGENOM" id="CLU_011675_5_0_6"/>
<dbReference type="UniPathway" id="UPA00159">
    <property type="reaction ID" value="UER00277"/>
</dbReference>
<dbReference type="Proteomes" id="UP000001866">
    <property type="component" value="Chromosome"/>
</dbReference>
<dbReference type="GO" id="GO:0005829">
    <property type="term" value="C:cytosol"/>
    <property type="evidence" value="ECO:0007669"/>
    <property type="project" value="TreeGrafter"/>
</dbReference>
<dbReference type="GO" id="GO:0005524">
    <property type="term" value="F:ATP binding"/>
    <property type="evidence" value="ECO:0007669"/>
    <property type="project" value="UniProtKB-KW"/>
</dbReference>
<dbReference type="GO" id="GO:0003883">
    <property type="term" value="F:CTP synthase activity"/>
    <property type="evidence" value="ECO:0007669"/>
    <property type="project" value="UniProtKB-UniRule"/>
</dbReference>
<dbReference type="GO" id="GO:0004359">
    <property type="term" value="F:glutaminase activity"/>
    <property type="evidence" value="ECO:0007669"/>
    <property type="project" value="RHEA"/>
</dbReference>
<dbReference type="GO" id="GO:0042802">
    <property type="term" value="F:identical protein binding"/>
    <property type="evidence" value="ECO:0007669"/>
    <property type="project" value="TreeGrafter"/>
</dbReference>
<dbReference type="GO" id="GO:0046872">
    <property type="term" value="F:metal ion binding"/>
    <property type="evidence" value="ECO:0007669"/>
    <property type="project" value="UniProtKB-KW"/>
</dbReference>
<dbReference type="GO" id="GO:0044210">
    <property type="term" value="P:'de novo' CTP biosynthetic process"/>
    <property type="evidence" value="ECO:0007669"/>
    <property type="project" value="UniProtKB-UniRule"/>
</dbReference>
<dbReference type="GO" id="GO:0019856">
    <property type="term" value="P:pyrimidine nucleobase biosynthetic process"/>
    <property type="evidence" value="ECO:0007669"/>
    <property type="project" value="TreeGrafter"/>
</dbReference>
<dbReference type="CDD" id="cd03113">
    <property type="entry name" value="CTPS_N"/>
    <property type="match status" value="1"/>
</dbReference>
<dbReference type="CDD" id="cd01746">
    <property type="entry name" value="GATase1_CTP_Synthase"/>
    <property type="match status" value="1"/>
</dbReference>
<dbReference type="FunFam" id="3.40.50.300:FF:000009">
    <property type="entry name" value="CTP synthase"/>
    <property type="match status" value="1"/>
</dbReference>
<dbReference type="FunFam" id="3.40.50.880:FF:000002">
    <property type="entry name" value="CTP synthase"/>
    <property type="match status" value="1"/>
</dbReference>
<dbReference type="Gene3D" id="3.40.50.880">
    <property type="match status" value="1"/>
</dbReference>
<dbReference type="Gene3D" id="3.40.50.300">
    <property type="entry name" value="P-loop containing nucleotide triphosphate hydrolases"/>
    <property type="match status" value="1"/>
</dbReference>
<dbReference type="HAMAP" id="MF_01227">
    <property type="entry name" value="PyrG"/>
    <property type="match status" value="1"/>
</dbReference>
<dbReference type="InterPro" id="IPR029062">
    <property type="entry name" value="Class_I_gatase-like"/>
</dbReference>
<dbReference type="InterPro" id="IPR004468">
    <property type="entry name" value="CTP_synthase"/>
</dbReference>
<dbReference type="InterPro" id="IPR017456">
    <property type="entry name" value="CTP_synthase_N"/>
</dbReference>
<dbReference type="InterPro" id="IPR017926">
    <property type="entry name" value="GATASE"/>
</dbReference>
<dbReference type="InterPro" id="IPR033828">
    <property type="entry name" value="GATase1_CTP_Synthase"/>
</dbReference>
<dbReference type="InterPro" id="IPR027417">
    <property type="entry name" value="P-loop_NTPase"/>
</dbReference>
<dbReference type="NCBIfam" id="NF003792">
    <property type="entry name" value="PRK05380.1"/>
    <property type="match status" value="1"/>
</dbReference>
<dbReference type="NCBIfam" id="TIGR00337">
    <property type="entry name" value="PyrG"/>
    <property type="match status" value="1"/>
</dbReference>
<dbReference type="PANTHER" id="PTHR11550">
    <property type="entry name" value="CTP SYNTHASE"/>
    <property type="match status" value="1"/>
</dbReference>
<dbReference type="PANTHER" id="PTHR11550:SF0">
    <property type="entry name" value="CTP SYNTHASE-RELATED"/>
    <property type="match status" value="1"/>
</dbReference>
<dbReference type="Pfam" id="PF06418">
    <property type="entry name" value="CTP_synth_N"/>
    <property type="match status" value="1"/>
</dbReference>
<dbReference type="Pfam" id="PF00117">
    <property type="entry name" value="GATase"/>
    <property type="match status" value="1"/>
</dbReference>
<dbReference type="SUPFAM" id="SSF52317">
    <property type="entry name" value="Class I glutamine amidotransferase-like"/>
    <property type="match status" value="1"/>
</dbReference>
<dbReference type="SUPFAM" id="SSF52540">
    <property type="entry name" value="P-loop containing nucleoside triphosphate hydrolases"/>
    <property type="match status" value="1"/>
</dbReference>
<dbReference type="PROSITE" id="PS51273">
    <property type="entry name" value="GATASE_TYPE_1"/>
    <property type="match status" value="1"/>
</dbReference>